<sequence length="328" mass="36364">MALSADVKAELNRVLVTRHDVMTAEVASLLRYTAALHLVGKKIVVESEVDSAETARRLTDMVEQLYKIEPEHQIIGAGNLRRRPRHVLRWTEGGMELARRTELIDRVGRPVRGLPRFIIGGTKDQCVAAWRGAFLAHGYITDPGRSSALEVQTPSNEAALALVGAARRIDVTAKTKEARGVNRVVIRDGDSIGRLLMLMGAQDTREVWEKQRRTRENRAKANRLANFDDANLRRSARAAVAAAARVERALEILDNDVPQHLAHAGQLRVEHKEASLEELGRLAEPPMTKDAVAGRIRRLLSMADKRAEELGLPDTHSAVTSELFNDVD</sequence>
<proteinExistence type="inferred from homology"/>
<feature type="chain" id="PRO_0000376476" description="Probable cell division protein WhiA">
    <location>
        <begin position="1"/>
        <end position="328"/>
    </location>
</feature>
<feature type="DNA-binding region" description="H-T-H motif" evidence="1">
    <location>
        <begin position="275"/>
        <end position="308"/>
    </location>
</feature>
<protein>
    <recommendedName>
        <fullName evidence="1">Probable cell division protein WhiA</fullName>
    </recommendedName>
</protein>
<organism>
    <name type="scientific">Corynebacterium jeikeium (strain K411)</name>
    <dbReference type="NCBI Taxonomy" id="306537"/>
    <lineage>
        <taxon>Bacteria</taxon>
        <taxon>Bacillati</taxon>
        <taxon>Actinomycetota</taxon>
        <taxon>Actinomycetes</taxon>
        <taxon>Mycobacteriales</taxon>
        <taxon>Corynebacteriaceae</taxon>
        <taxon>Corynebacterium</taxon>
    </lineage>
</organism>
<name>WHIA_CORJK</name>
<dbReference type="EMBL" id="CR931997">
    <property type="protein sequence ID" value="CAI37166.1"/>
    <property type="molecule type" value="Genomic_DNA"/>
</dbReference>
<dbReference type="RefSeq" id="WP_011273575.1">
    <property type="nucleotide sequence ID" value="NC_007164.1"/>
</dbReference>
<dbReference type="SMR" id="Q4JVJ1"/>
<dbReference type="STRING" id="306537.jk1002"/>
<dbReference type="GeneID" id="92738516"/>
<dbReference type="KEGG" id="cjk:jk1002"/>
<dbReference type="PATRIC" id="fig|306537.10.peg.1014"/>
<dbReference type="eggNOG" id="COG1481">
    <property type="taxonomic scope" value="Bacteria"/>
</dbReference>
<dbReference type="HOGENOM" id="CLU_053282_0_0_11"/>
<dbReference type="OrthoDB" id="5197218at2"/>
<dbReference type="Proteomes" id="UP000000545">
    <property type="component" value="Chromosome"/>
</dbReference>
<dbReference type="GO" id="GO:0003677">
    <property type="term" value="F:DNA binding"/>
    <property type="evidence" value="ECO:0007669"/>
    <property type="project" value="UniProtKB-UniRule"/>
</dbReference>
<dbReference type="GO" id="GO:0051301">
    <property type="term" value="P:cell division"/>
    <property type="evidence" value="ECO:0007669"/>
    <property type="project" value="UniProtKB-UniRule"/>
</dbReference>
<dbReference type="GO" id="GO:0043937">
    <property type="term" value="P:regulation of sporulation"/>
    <property type="evidence" value="ECO:0007669"/>
    <property type="project" value="InterPro"/>
</dbReference>
<dbReference type="FunFam" id="3.10.28.10:FF:000001">
    <property type="entry name" value="Probable cell division protein WhiA"/>
    <property type="match status" value="1"/>
</dbReference>
<dbReference type="Gene3D" id="3.10.28.10">
    <property type="entry name" value="Homing endonucleases"/>
    <property type="match status" value="1"/>
</dbReference>
<dbReference type="HAMAP" id="MF_01420">
    <property type="entry name" value="HTH_type_WhiA"/>
    <property type="match status" value="1"/>
</dbReference>
<dbReference type="InterPro" id="IPR027434">
    <property type="entry name" value="Homing_endonucl"/>
</dbReference>
<dbReference type="InterPro" id="IPR018478">
    <property type="entry name" value="Sporu_reg_WhiA_N_dom"/>
</dbReference>
<dbReference type="InterPro" id="IPR003802">
    <property type="entry name" value="Sporulation_regulator_WhiA"/>
</dbReference>
<dbReference type="InterPro" id="IPR023054">
    <property type="entry name" value="Sporulation_regulator_WhiA_C"/>
</dbReference>
<dbReference type="InterPro" id="IPR039518">
    <property type="entry name" value="WhiA_LAGLIDADG_dom"/>
</dbReference>
<dbReference type="NCBIfam" id="TIGR00647">
    <property type="entry name" value="DNA_bind_WhiA"/>
    <property type="match status" value="1"/>
</dbReference>
<dbReference type="PANTHER" id="PTHR37307">
    <property type="entry name" value="CELL DIVISION PROTEIN WHIA-RELATED"/>
    <property type="match status" value="1"/>
</dbReference>
<dbReference type="PANTHER" id="PTHR37307:SF1">
    <property type="entry name" value="CELL DIVISION PROTEIN WHIA-RELATED"/>
    <property type="match status" value="1"/>
</dbReference>
<dbReference type="Pfam" id="PF02650">
    <property type="entry name" value="HTH_WhiA"/>
    <property type="match status" value="1"/>
</dbReference>
<dbReference type="Pfam" id="PF14527">
    <property type="entry name" value="LAGLIDADG_WhiA"/>
    <property type="match status" value="1"/>
</dbReference>
<dbReference type="Pfam" id="PF10298">
    <property type="entry name" value="WhiA_N"/>
    <property type="match status" value="1"/>
</dbReference>
<evidence type="ECO:0000255" key="1">
    <source>
        <dbReference type="HAMAP-Rule" id="MF_01420"/>
    </source>
</evidence>
<comment type="function">
    <text evidence="1">Involved in cell division and chromosome segregation.</text>
</comment>
<comment type="similarity">
    <text evidence="1">Belongs to the WhiA family.</text>
</comment>
<accession>Q4JVJ1</accession>
<reference key="1">
    <citation type="journal article" date="2005" name="J. Bacteriol.">
        <title>Complete genome sequence and analysis of the multiresistant nosocomial pathogen Corynebacterium jeikeium K411, a lipid-requiring bacterium of the human skin flora.</title>
        <authorList>
            <person name="Tauch A."/>
            <person name="Kaiser O."/>
            <person name="Hain T."/>
            <person name="Goesmann A."/>
            <person name="Weisshaar B."/>
            <person name="Albersmeier A."/>
            <person name="Bekel T."/>
            <person name="Bischoff N."/>
            <person name="Brune I."/>
            <person name="Chakraborty T."/>
            <person name="Kalinowski J."/>
            <person name="Meyer F."/>
            <person name="Rupp O."/>
            <person name="Schneiker S."/>
            <person name="Viehoever P."/>
            <person name="Puehler A."/>
        </authorList>
    </citation>
    <scope>NUCLEOTIDE SEQUENCE [LARGE SCALE GENOMIC DNA]</scope>
    <source>
        <strain>K411</strain>
    </source>
</reference>
<keyword id="KW-0131">Cell cycle</keyword>
<keyword id="KW-0132">Cell division</keyword>
<keyword id="KW-0238">DNA-binding</keyword>
<keyword id="KW-1185">Reference proteome</keyword>
<gene>
    <name evidence="1" type="primary">whiA</name>
    <name type="ordered locus">jk1002</name>
</gene>